<organism>
    <name type="scientific">Xanthomonas axonopodis pv. citri (strain 306)</name>
    <dbReference type="NCBI Taxonomy" id="190486"/>
    <lineage>
        <taxon>Bacteria</taxon>
        <taxon>Pseudomonadati</taxon>
        <taxon>Pseudomonadota</taxon>
        <taxon>Gammaproteobacteria</taxon>
        <taxon>Lysobacterales</taxon>
        <taxon>Lysobacteraceae</taxon>
        <taxon>Xanthomonas</taxon>
    </lineage>
</organism>
<dbReference type="EMBL" id="AE008923">
    <property type="protein sequence ID" value="AAM35835.1"/>
    <property type="molecule type" value="Genomic_DNA"/>
</dbReference>
<dbReference type="RefSeq" id="WP_003486765.1">
    <property type="nucleotide sequence ID" value="NC_003919.1"/>
</dbReference>
<dbReference type="SMR" id="Q8PNU2"/>
<dbReference type="GeneID" id="66910133"/>
<dbReference type="KEGG" id="xac:XAC0947"/>
<dbReference type="eggNOG" id="COG3017">
    <property type="taxonomic scope" value="Bacteria"/>
</dbReference>
<dbReference type="HOGENOM" id="CLU_092816_2_2_6"/>
<dbReference type="Proteomes" id="UP000000576">
    <property type="component" value="Chromosome"/>
</dbReference>
<dbReference type="GO" id="GO:0009279">
    <property type="term" value="C:cell outer membrane"/>
    <property type="evidence" value="ECO:0007669"/>
    <property type="project" value="UniProtKB-SubCell"/>
</dbReference>
<dbReference type="GO" id="GO:0044874">
    <property type="term" value="P:lipoprotein localization to outer membrane"/>
    <property type="evidence" value="ECO:0007669"/>
    <property type="project" value="UniProtKB-UniRule"/>
</dbReference>
<dbReference type="GO" id="GO:0015031">
    <property type="term" value="P:protein transport"/>
    <property type="evidence" value="ECO:0007669"/>
    <property type="project" value="UniProtKB-KW"/>
</dbReference>
<dbReference type="CDD" id="cd16326">
    <property type="entry name" value="LolB"/>
    <property type="match status" value="1"/>
</dbReference>
<dbReference type="Gene3D" id="2.50.20.10">
    <property type="entry name" value="Lipoprotein localisation LolA/LolB/LppX"/>
    <property type="match status" value="1"/>
</dbReference>
<dbReference type="HAMAP" id="MF_00233">
    <property type="entry name" value="LolB"/>
    <property type="match status" value="1"/>
</dbReference>
<dbReference type="InterPro" id="IPR029046">
    <property type="entry name" value="LolA/LolB/LppX"/>
</dbReference>
<dbReference type="InterPro" id="IPR004565">
    <property type="entry name" value="OM_lipoprot_LolB"/>
</dbReference>
<dbReference type="NCBIfam" id="TIGR00548">
    <property type="entry name" value="lolB"/>
    <property type="match status" value="1"/>
</dbReference>
<dbReference type="Pfam" id="PF03550">
    <property type="entry name" value="LolB"/>
    <property type="match status" value="1"/>
</dbReference>
<dbReference type="SUPFAM" id="SSF89392">
    <property type="entry name" value="Prokaryotic lipoproteins and lipoprotein localization factors"/>
    <property type="match status" value="1"/>
</dbReference>
<dbReference type="PROSITE" id="PS51257">
    <property type="entry name" value="PROKAR_LIPOPROTEIN"/>
    <property type="match status" value="1"/>
</dbReference>
<reference key="1">
    <citation type="journal article" date="2002" name="Nature">
        <title>Comparison of the genomes of two Xanthomonas pathogens with differing host specificities.</title>
        <authorList>
            <person name="da Silva A.C.R."/>
            <person name="Ferro J.A."/>
            <person name="Reinach F.C."/>
            <person name="Farah C.S."/>
            <person name="Furlan L.R."/>
            <person name="Quaggio R.B."/>
            <person name="Monteiro-Vitorello C.B."/>
            <person name="Van Sluys M.A."/>
            <person name="Almeida N.F. Jr."/>
            <person name="Alves L.M.C."/>
            <person name="do Amaral A.M."/>
            <person name="Bertolini M.C."/>
            <person name="Camargo L.E.A."/>
            <person name="Camarotte G."/>
            <person name="Cannavan F."/>
            <person name="Cardozo J."/>
            <person name="Chambergo F."/>
            <person name="Ciapina L.P."/>
            <person name="Cicarelli R.M.B."/>
            <person name="Coutinho L.L."/>
            <person name="Cursino-Santos J.R."/>
            <person name="El-Dorry H."/>
            <person name="Faria J.B."/>
            <person name="Ferreira A.J.S."/>
            <person name="Ferreira R.C.C."/>
            <person name="Ferro M.I.T."/>
            <person name="Formighieri E.F."/>
            <person name="Franco M.C."/>
            <person name="Greggio C.C."/>
            <person name="Gruber A."/>
            <person name="Katsuyama A.M."/>
            <person name="Kishi L.T."/>
            <person name="Leite R.P."/>
            <person name="Lemos E.G.M."/>
            <person name="Lemos M.V.F."/>
            <person name="Locali E.C."/>
            <person name="Machado M.A."/>
            <person name="Madeira A.M.B.N."/>
            <person name="Martinez-Rossi N.M."/>
            <person name="Martins E.C."/>
            <person name="Meidanis J."/>
            <person name="Menck C.F.M."/>
            <person name="Miyaki C.Y."/>
            <person name="Moon D.H."/>
            <person name="Moreira L.M."/>
            <person name="Novo M.T.M."/>
            <person name="Okura V.K."/>
            <person name="Oliveira M.C."/>
            <person name="Oliveira V.R."/>
            <person name="Pereira H.A."/>
            <person name="Rossi A."/>
            <person name="Sena J.A.D."/>
            <person name="Silva C."/>
            <person name="de Souza R.F."/>
            <person name="Spinola L.A.F."/>
            <person name="Takita M.A."/>
            <person name="Tamura R.E."/>
            <person name="Teixeira E.C."/>
            <person name="Tezza R.I.D."/>
            <person name="Trindade dos Santos M."/>
            <person name="Truffi D."/>
            <person name="Tsai S.M."/>
            <person name="White F.F."/>
            <person name="Setubal J.C."/>
            <person name="Kitajima J.P."/>
        </authorList>
    </citation>
    <scope>NUCLEOTIDE SEQUENCE [LARGE SCALE GENOMIC DNA]</scope>
    <source>
        <strain>306</strain>
    </source>
</reference>
<gene>
    <name evidence="1" type="primary">lolB</name>
    <name type="ordered locus">XAC0947</name>
</gene>
<accession>Q8PNU2</accession>
<sequence>MSKTVRTLALGGLVLAGLSACVSVPRGQGSGAAVVDHVSDSARQAEAARQAWLQAHPHWSFQGRVAISKDRNGGSGRIDWQQDGPRYRVQLSAPVTRQSWVLTGDTTSGAGRLEGLEGGPRSGPDAEQVLLEATGWTIPVNQMPDWVRALRIAGAGAARVDLDAAGRPRTVQQDGWTIDFLAWTPASAEQPELPQRIEARSGEAKVRLLVDQWTVSP</sequence>
<proteinExistence type="inferred from homology"/>
<keyword id="KW-0998">Cell outer membrane</keyword>
<keyword id="KW-0143">Chaperone</keyword>
<keyword id="KW-0449">Lipoprotein</keyword>
<keyword id="KW-0472">Membrane</keyword>
<keyword id="KW-0564">Palmitate</keyword>
<keyword id="KW-0653">Protein transport</keyword>
<keyword id="KW-0732">Signal</keyword>
<keyword id="KW-0813">Transport</keyword>
<name>LOLB_XANAC</name>
<protein>
    <recommendedName>
        <fullName evidence="1">Outer-membrane lipoprotein LolB</fullName>
    </recommendedName>
</protein>
<evidence type="ECO:0000255" key="1">
    <source>
        <dbReference type="HAMAP-Rule" id="MF_00233"/>
    </source>
</evidence>
<evidence type="ECO:0000256" key="2">
    <source>
        <dbReference type="SAM" id="MobiDB-lite"/>
    </source>
</evidence>
<feature type="signal peptide" evidence="1">
    <location>
        <begin position="1"/>
        <end position="20"/>
    </location>
</feature>
<feature type="chain" id="PRO_0000018318" description="Outer-membrane lipoprotein LolB">
    <location>
        <begin position="21"/>
        <end position="217"/>
    </location>
</feature>
<feature type="region of interest" description="Disordered" evidence="2">
    <location>
        <begin position="105"/>
        <end position="124"/>
    </location>
</feature>
<feature type="lipid moiety-binding region" description="N-palmitoyl cysteine" evidence="1">
    <location>
        <position position="21"/>
    </location>
</feature>
<feature type="lipid moiety-binding region" description="S-diacylglycerol cysteine" evidence="1">
    <location>
        <position position="21"/>
    </location>
</feature>
<comment type="function">
    <text evidence="1">Plays a critical role in the incorporation of lipoproteins in the outer membrane after they are released by the LolA protein.</text>
</comment>
<comment type="subunit">
    <text evidence="1">Monomer.</text>
</comment>
<comment type="subcellular location">
    <subcellularLocation>
        <location evidence="1">Cell outer membrane</location>
        <topology evidence="1">Lipid-anchor</topology>
    </subcellularLocation>
</comment>
<comment type="similarity">
    <text evidence="1">Belongs to the LolB family.</text>
</comment>